<organism>
    <name type="scientific">Phaeodactylum tricornutum (strain CCAP 1055/1)</name>
    <dbReference type="NCBI Taxonomy" id="556484"/>
    <lineage>
        <taxon>Eukaryota</taxon>
        <taxon>Sar</taxon>
        <taxon>Stramenopiles</taxon>
        <taxon>Ochrophyta</taxon>
        <taxon>Bacillariophyta</taxon>
        <taxon>Bacillariophyceae</taxon>
        <taxon>Bacillariophycidae</taxon>
        <taxon>Naviculales</taxon>
        <taxon>Phaeodactylaceae</taxon>
        <taxon>Phaeodactylum</taxon>
    </lineage>
</organism>
<sequence>MTATLERRQSVSLWERFCGWITSTENRLYIGWFGCLMFPTLLTATSCYIIAFIAAPPVDIDGIREPVAGSLLYGNNIITGAVIPSSNAIGIHFYPIWEAASVDEWLYNGGPYQLIVLHFLLGVASYMGREWELSYRLGMRPWIFVAFSAPVAAASAVFLVYPIGQGSFSDGMPLGISGTFNFMLVFQAEHNILMHPFHMAGVAGVFGGSLFSAMHGSLVTSSLIRETTENESTNYGYKFGQEEETYNIVAAHGYFGRLIFQYASFNNSRALHFFLALWPVVGIWLTAMGVSTMAFNLNGFNFNQSVVDSQGRVINTWADIINRADLGMEVMHERNAHNFPLDLASGEVLPVALTAPAVNG</sequence>
<feature type="chain" id="PRO_0000316519" description="Photosystem II protein D1" evidence="1">
    <location>
        <begin position="1"/>
        <end position="344"/>
    </location>
</feature>
<feature type="propeptide" id="PRO_0000316520" evidence="1">
    <location>
        <begin position="345"/>
        <end position="360"/>
    </location>
</feature>
<feature type="transmembrane region" description="Helical" evidence="1">
    <location>
        <begin position="29"/>
        <end position="46"/>
    </location>
</feature>
<feature type="transmembrane region" description="Helical" evidence="1">
    <location>
        <begin position="118"/>
        <end position="133"/>
    </location>
</feature>
<feature type="transmembrane region" description="Helical" evidence="1">
    <location>
        <begin position="142"/>
        <end position="156"/>
    </location>
</feature>
<feature type="transmembrane region" description="Helical" evidence="1">
    <location>
        <begin position="197"/>
        <end position="218"/>
    </location>
</feature>
<feature type="transmembrane region" description="Helical" evidence="1">
    <location>
        <begin position="274"/>
        <end position="288"/>
    </location>
</feature>
<feature type="binding site" description="axial binding residue" evidence="1">
    <location>
        <position position="118"/>
    </location>
    <ligand>
        <name>chlorophyll a</name>
        <dbReference type="ChEBI" id="CHEBI:58416"/>
        <label>ChlzD1</label>
    </ligand>
    <ligandPart>
        <name>Mg</name>
        <dbReference type="ChEBI" id="CHEBI:25107"/>
    </ligandPart>
</feature>
<feature type="binding site" evidence="1">
    <location>
        <position position="126"/>
    </location>
    <ligand>
        <name>pheophytin a</name>
        <dbReference type="ChEBI" id="CHEBI:136840"/>
        <label>D1</label>
    </ligand>
</feature>
<feature type="binding site" evidence="1">
    <location>
        <position position="170"/>
    </location>
    <ligand>
        <name>[CaMn4O5] cluster</name>
        <dbReference type="ChEBI" id="CHEBI:189552"/>
    </ligand>
</feature>
<feature type="binding site" evidence="1">
    <location>
        <position position="189"/>
    </location>
    <ligand>
        <name>[CaMn4O5] cluster</name>
        <dbReference type="ChEBI" id="CHEBI:189552"/>
    </ligand>
</feature>
<feature type="binding site" description="axial binding residue" evidence="1">
    <location>
        <position position="198"/>
    </location>
    <ligand>
        <name>chlorophyll a</name>
        <dbReference type="ChEBI" id="CHEBI:58416"/>
        <label>PD1</label>
    </ligand>
    <ligandPart>
        <name>Mg</name>
        <dbReference type="ChEBI" id="CHEBI:25107"/>
    </ligandPart>
</feature>
<feature type="binding site" evidence="1">
    <location>
        <position position="215"/>
    </location>
    <ligand>
        <name>a quinone</name>
        <dbReference type="ChEBI" id="CHEBI:132124"/>
        <label>B</label>
    </ligand>
</feature>
<feature type="binding site" evidence="1">
    <location>
        <position position="215"/>
    </location>
    <ligand>
        <name>Fe cation</name>
        <dbReference type="ChEBI" id="CHEBI:24875"/>
        <note>ligand shared with heterodimeric partner</note>
    </ligand>
</feature>
<feature type="binding site" evidence="1">
    <location>
        <begin position="264"/>
        <end position="265"/>
    </location>
    <ligand>
        <name>a quinone</name>
        <dbReference type="ChEBI" id="CHEBI:132124"/>
        <label>B</label>
    </ligand>
</feature>
<feature type="binding site" evidence="1">
    <location>
        <position position="272"/>
    </location>
    <ligand>
        <name>Fe cation</name>
        <dbReference type="ChEBI" id="CHEBI:24875"/>
        <note>ligand shared with heterodimeric partner</note>
    </ligand>
</feature>
<feature type="binding site" evidence="1">
    <location>
        <position position="332"/>
    </location>
    <ligand>
        <name>[CaMn4O5] cluster</name>
        <dbReference type="ChEBI" id="CHEBI:189552"/>
    </ligand>
</feature>
<feature type="binding site" evidence="1">
    <location>
        <position position="333"/>
    </location>
    <ligand>
        <name>[CaMn4O5] cluster</name>
        <dbReference type="ChEBI" id="CHEBI:189552"/>
    </ligand>
</feature>
<feature type="binding site" evidence="1">
    <location>
        <position position="342"/>
    </location>
    <ligand>
        <name>[CaMn4O5] cluster</name>
        <dbReference type="ChEBI" id="CHEBI:189552"/>
    </ligand>
</feature>
<feature type="binding site" evidence="1">
    <location>
        <position position="344"/>
    </location>
    <ligand>
        <name>[CaMn4O5] cluster</name>
        <dbReference type="ChEBI" id="CHEBI:189552"/>
    </ligand>
</feature>
<feature type="site" description="Tyrosine radical intermediate" evidence="1">
    <location>
        <position position="161"/>
    </location>
</feature>
<feature type="site" description="Stabilizes free radical intermediate" evidence="1">
    <location>
        <position position="190"/>
    </location>
</feature>
<feature type="site" description="Cleavage; by CTPA" evidence="1">
    <location>
        <begin position="344"/>
        <end position="345"/>
    </location>
</feature>
<evidence type="ECO:0000255" key="1">
    <source>
        <dbReference type="HAMAP-Rule" id="MF_01379"/>
    </source>
</evidence>
<geneLocation type="chloroplast"/>
<reference key="1">
    <citation type="journal article" date="2007" name="Mol. Genet. Genomics">
        <title>Chloroplast genomes of the diatoms Phaeodactylum tricornutum and Thalassiosira pseudonana: comparison with other plastid genomes of the red lineage.</title>
        <authorList>
            <person name="Oudot-Le Secq M.-P."/>
            <person name="Grimwood J."/>
            <person name="Shapiro H."/>
            <person name="Armbrust E.V."/>
            <person name="Bowler C."/>
            <person name="Green B.R."/>
        </authorList>
    </citation>
    <scope>NUCLEOTIDE SEQUENCE [LARGE SCALE GENOMIC DNA]</scope>
    <source>
        <strain>CCAP 1055/1</strain>
    </source>
</reference>
<protein>
    <recommendedName>
        <fullName evidence="1">Photosystem II protein D1</fullName>
        <shortName evidence="1">PSII D1 protein</shortName>
        <ecNumber evidence="1">1.10.3.9</ecNumber>
    </recommendedName>
    <alternativeName>
        <fullName evidence="1">Photosystem II Q(B) protein</fullName>
    </alternativeName>
</protein>
<proteinExistence type="inferred from homology"/>
<accession>A0T0G9</accession>
<dbReference type="EC" id="1.10.3.9" evidence="1"/>
<dbReference type="EMBL" id="EF067920">
    <property type="protein sequence ID" value="ABK20667.1"/>
    <property type="molecule type" value="Genomic_DNA"/>
</dbReference>
<dbReference type="RefSeq" id="YP_874444.1">
    <property type="nucleotide sequence ID" value="NC_008588.1"/>
</dbReference>
<dbReference type="SMR" id="A0T0G9"/>
<dbReference type="STRING" id="556484.A0T0G9"/>
<dbReference type="GeneID" id="4524567"/>
<dbReference type="InParanoid" id="A0T0G9"/>
<dbReference type="Proteomes" id="UP000000759">
    <property type="component" value="Chloroplast"/>
</dbReference>
<dbReference type="GO" id="GO:0009535">
    <property type="term" value="C:chloroplast thylakoid membrane"/>
    <property type="evidence" value="ECO:0007669"/>
    <property type="project" value="UniProtKB-SubCell"/>
</dbReference>
<dbReference type="GO" id="GO:0009523">
    <property type="term" value="C:photosystem II"/>
    <property type="evidence" value="ECO:0007669"/>
    <property type="project" value="UniProtKB-KW"/>
</dbReference>
<dbReference type="GO" id="GO:0016168">
    <property type="term" value="F:chlorophyll binding"/>
    <property type="evidence" value="ECO:0007669"/>
    <property type="project" value="UniProtKB-UniRule"/>
</dbReference>
<dbReference type="GO" id="GO:0045156">
    <property type="term" value="F:electron transporter, transferring electrons within the cyclic electron transport pathway of photosynthesis activity"/>
    <property type="evidence" value="ECO:0007669"/>
    <property type="project" value="InterPro"/>
</dbReference>
<dbReference type="GO" id="GO:0005506">
    <property type="term" value="F:iron ion binding"/>
    <property type="evidence" value="ECO:0007669"/>
    <property type="project" value="UniProtKB-UniRule"/>
</dbReference>
<dbReference type="GO" id="GO:0016682">
    <property type="term" value="F:oxidoreductase activity, acting on diphenols and related substances as donors, oxygen as acceptor"/>
    <property type="evidence" value="ECO:0007669"/>
    <property type="project" value="UniProtKB-UniRule"/>
</dbReference>
<dbReference type="GO" id="GO:0009772">
    <property type="term" value="P:photosynthetic electron transport in photosystem II"/>
    <property type="evidence" value="ECO:0007669"/>
    <property type="project" value="InterPro"/>
</dbReference>
<dbReference type="GO" id="GO:0009635">
    <property type="term" value="P:response to herbicide"/>
    <property type="evidence" value="ECO:0007669"/>
    <property type="project" value="UniProtKB-KW"/>
</dbReference>
<dbReference type="CDD" id="cd09289">
    <property type="entry name" value="Photosystem-II_D1"/>
    <property type="match status" value="1"/>
</dbReference>
<dbReference type="FunFam" id="1.20.85.10:FF:000002">
    <property type="entry name" value="Photosystem II protein D1"/>
    <property type="match status" value="1"/>
</dbReference>
<dbReference type="Gene3D" id="1.20.85.10">
    <property type="entry name" value="Photosystem II protein D1-like"/>
    <property type="match status" value="1"/>
</dbReference>
<dbReference type="HAMAP" id="MF_01379">
    <property type="entry name" value="PSII_PsbA_D1"/>
    <property type="match status" value="1"/>
</dbReference>
<dbReference type="InterPro" id="IPR055266">
    <property type="entry name" value="D1/D2"/>
</dbReference>
<dbReference type="InterPro" id="IPR036854">
    <property type="entry name" value="Photo_II_D1/D2_sf"/>
</dbReference>
<dbReference type="InterPro" id="IPR000484">
    <property type="entry name" value="Photo_RC_L/M"/>
</dbReference>
<dbReference type="InterPro" id="IPR055265">
    <property type="entry name" value="Photo_RC_L/M_CS"/>
</dbReference>
<dbReference type="InterPro" id="IPR005867">
    <property type="entry name" value="PSII_D1"/>
</dbReference>
<dbReference type="NCBIfam" id="TIGR01151">
    <property type="entry name" value="psbA"/>
    <property type="match status" value="1"/>
</dbReference>
<dbReference type="PANTHER" id="PTHR33149:SF12">
    <property type="entry name" value="PHOTOSYSTEM II D2 PROTEIN"/>
    <property type="match status" value="1"/>
</dbReference>
<dbReference type="PANTHER" id="PTHR33149">
    <property type="entry name" value="PHOTOSYSTEM II PROTEIN D1"/>
    <property type="match status" value="1"/>
</dbReference>
<dbReference type="Pfam" id="PF00124">
    <property type="entry name" value="Photo_RC"/>
    <property type="match status" value="1"/>
</dbReference>
<dbReference type="PRINTS" id="PR00256">
    <property type="entry name" value="REACTNCENTRE"/>
</dbReference>
<dbReference type="SUPFAM" id="SSF81483">
    <property type="entry name" value="Bacterial photosystem II reaction centre, L and M subunits"/>
    <property type="match status" value="1"/>
</dbReference>
<dbReference type="PROSITE" id="PS00244">
    <property type="entry name" value="REACTION_CENTER"/>
    <property type="match status" value="1"/>
</dbReference>
<keyword id="KW-0106">Calcium</keyword>
<keyword id="KW-0148">Chlorophyll</keyword>
<keyword id="KW-0150">Chloroplast</keyword>
<keyword id="KW-0157">Chromophore</keyword>
<keyword id="KW-0249">Electron transport</keyword>
<keyword id="KW-0359">Herbicide resistance</keyword>
<keyword id="KW-0408">Iron</keyword>
<keyword id="KW-0460">Magnesium</keyword>
<keyword id="KW-0464">Manganese</keyword>
<keyword id="KW-0472">Membrane</keyword>
<keyword id="KW-0479">Metal-binding</keyword>
<keyword id="KW-0560">Oxidoreductase</keyword>
<keyword id="KW-0602">Photosynthesis</keyword>
<keyword id="KW-0604">Photosystem II</keyword>
<keyword id="KW-0934">Plastid</keyword>
<keyword id="KW-1185">Reference proteome</keyword>
<keyword id="KW-0793">Thylakoid</keyword>
<keyword id="KW-0812">Transmembrane</keyword>
<keyword id="KW-1133">Transmembrane helix</keyword>
<keyword id="KW-0813">Transport</keyword>
<name>PSBA_PHATC</name>
<comment type="function">
    <text evidence="1">Photosystem II (PSII) is a light-driven water:plastoquinone oxidoreductase that uses light energy to abstract electrons from H(2)O, generating O(2) and a proton gradient subsequently used for ATP formation. It consists of a core antenna complex that captures photons, and an electron transfer chain that converts photonic excitation into a charge separation. The D1/D2 (PsbA/PsbD) reaction center heterodimer binds P680, the primary electron donor of PSII as well as several subsequent electron acceptors.</text>
</comment>
<comment type="catalytic activity">
    <reaction evidence="1">
        <text>2 a plastoquinone + 4 hnu + 2 H2O = 2 a plastoquinol + O2</text>
        <dbReference type="Rhea" id="RHEA:36359"/>
        <dbReference type="Rhea" id="RHEA-COMP:9561"/>
        <dbReference type="Rhea" id="RHEA-COMP:9562"/>
        <dbReference type="ChEBI" id="CHEBI:15377"/>
        <dbReference type="ChEBI" id="CHEBI:15379"/>
        <dbReference type="ChEBI" id="CHEBI:17757"/>
        <dbReference type="ChEBI" id="CHEBI:30212"/>
        <dbReference type="ChEBI" id="CHEBI:62192"/>
        <dbReference type="EC" id="1.10.3.9"/>
    </reaction>
</comment>
<comment type="cofactor">
    <text evidence="1">The D1/D2 heterodimer binds P680, chlorophylls that are the primary electron donor of PSII, and subsequent electron acceptors. It shares a non-heme iron and each subunit binds pheophytin, quinone, additional chlorophylls, carotenoids and lipids. D1 provides most of the ligands for the Mn4-Ca-O5 cluster of the oxygen-evolving complex (OEC). There is also a Cl(-1) ion associated with D1 and D2, which is required for oxygen evolution. The PSII complex binds additional chlorophylls, carotenoids and specific lipids.</text>
</comment>
<comment type="subunit">
    <text evidence="1">PSII is composed of 1 copy each of membrane proteins PsbA, PsbB, PsbC, PsbD, PsbE, PsbF, PsbH, PsbI, PsbJ, PsbK, PsbL, PsbM, PsbT, PsbX, PsbY, PsbZ, Psb30/Ycf12, at least 3 peripheral proteins of the oxygen-evolving complex and a large number of cofactors. It forms dimeric complexes.</text>
</comment>
<comment type="subcellular location">
    <subcellularLocation>
        <location evidence="1">Plastid</location>
        <location evidence="1">Chloroplast thylakoid membrane</location>
        <topology evidence="1">Multi-pass membrane protein</topology>
    </subcellularLocation>
</comment>
<comment type="PTM">
    <text evidence="1">Tyr-161 forms a radical intermediate that is referred to as redox-active TyrZ, YZ or Y-Z.</text>
</comment>
<comment type="PTM">
    <text evidence="1">C-terminally processed by CTPA; processing is essential to allow assembly of the oxygen-evolving complex and thus photosynthetic growth.</text>
</comment>
<comment type="miscellaneous">
    <text evidence="1">2 of the reaction center chlorophylls (ChlD1 and ChlD2) are entirely coordinated by water.</text>
</comment>
<comment type="miscellaneous">
    <text evidence="1">Herbicides such as atrazine, BNT, diuron or ioxynil bind in the Q(B) binding site and block subsequent electron transfer.</text>
</comment>
<comment type="similarity">
    <text evidence="1">Belongs to the reaction center PufL/M/PsbA/D family.</text>
</comment>
<gene>
    <name evidence="1" type="primary">psbA</name>
</gene>